<keyword id="KW-0963">Cytoplasm</keyword>
<keyword id="KW-0312">Gluconeogenesis</keyword>
<keyword id="KW-0324">Glycolysis</keyword>
<keyword id="KW-0413">Isomerase</keyword>
<reference key="1">
    <citation type="submission" date="2008-01" db="EMBL/GenBank/DDBJ databases">
        <title>Complete sequence of chromosome of Caulobacter sp. K31.</title>
        <authorList>
            <consortium name="US DOE Joint Genome Institute"/>
            <person name="Copeland A."/>
            <person name="Lucas S."/>
            <person name="Lapidus A."/>
            <person name="Barry K."/>
            <person name="Glavina del Rio T."/>
            <person name="Dalin E."/>
            <person name="Tice H."/>
            <person name="Pitluck S."/>
            <person name="Bruce D."/>
            <person name="Goodwin L."/>
            <person name="Thompson L.S."/>
            <person name="Brettin T."/>
            <person name="Detter J.C."/>
            <person name="Han C."/>
            <person name="Schmutz J."/>
            <person name="Larimer F."/>
            <person name="Land M."/>
            <person name="Hauser L."/>
            <person name="Kyrpides N."/>
            <person name="Kim E."/>
            <person name="Stephens C."/>
            <person name="Richardson P."/>
        </authorList>
    </citation>
    <scope>NUCLEOTIDE SEQUENCE [LARGE SCALE GENOMIC DNA]</scope>
    <source>
        <strain>K31</strain>
    </source>
</reference>
<sequence length="539" mass="57254">MADLAAAWTRLEAAAKVAGEKRIALMFEAEPGRLAALTLNVAGLHIDLSKQAWDEAGLEAALDLAHAADVEGARTRMFGGEAINSSEGRAVLHTALRAAKDADVRAGGVPVMAEVEAVRVRMKAFTEAVRSGAIKGATGKPFKAILHIGIGGSDLGPRLLWDALRPIKPTIDLRFVANVDGAEFALTTADLDPAETLVIVVSKTFTTQETLANAAAARAWLSAALGEQGANQHLAAISTALDKTAAFGVADDRVFGFWDWVGGRYSLWSSVSLSVAVACGWEAFEGFLQGGAAMDAHFRDAPLEKNAAVLIALAQIFNRNGLDRRARSVVPYSHRLRRLASFLQQLEMESNGKSVGPDGQAVKHGTATVVFGDEGANVQHAYFQCMHQGTDITPLEFVALAQSDEGPAGMHAKLLSNVLAQAEALMVGRTIEDVRTELVAKGVSEAEIATLAPQRAFAGNRPSTMVVLDRLTPQTFGALIALYEHKTFVEGVIWGVNSFDQWGVELGKVMAGRILPELESGAAGRHDPSTAALIERLKL</sequence>
<feature type="chain" id="PRO_1000081233" description="Glucose-6-phosphate isomerase">
    <location>
        <begin position="1"/>
        <end position="539"/>
    </location>
</feature>
<feature type="active site" description="Proton donor" evidence="1">
    <location>
        <position position="349"/>
    </location>
</feature>
<feature type="active site" evidence="1">
    <location>
        <position position="380"/>
    </location>
</feature>
<feature type="active site" evidence="1">
    <location>
        <position position="508"/>
    </location>
</feature>
<protein>
    <recommendedName>
        <fullName evidence="1">Glucose-6-phosphate isomerase</fullName>
        <shortName evidence="1">GPI</shortName>
        <ecNumber evidence="1">5.3.1.9</ecNumber>
    </recommendedName>
    <alternativeName>
        <fullName evidence="1">Phosphoglucose isomerase</fullName>
        <shortName evidence="1">PGI</shortName>
    </alternativeName>
    <alternativeName>
        <fullName evidence="1">Phosphohexose isomerase</fullName>
        <shortName evidence="1">PHI</shortName>
    </alternativeName>
</protein>
<gene>
    <name evidence="1" type="primary">pgi</name>
    <name type="ordered locus">Caul_4688</name>
</gene>
<comment type="function">
    <text evidence="1">Catalyzes the reversible isomerization of glucose-6-phosphate to fructose-6-phosphate.</text>
</comment>
<comment type="catalytic activity">
    <reaction evidence="1">
        <text>alpha-D-glucose 6-phosphate = beta-D-fructose 6-phosphate</text>
        <dbReference type="Rhea" id="RHEA:11816"/>
        <dbReference type="ChEBI" id="CHEBI:57634"/>
        <dbReference type="ChEBI" id="CHEBI:58225"/>
        <dbReference type="EC" id="5.3.1.9"/>
    </reaction>
</comment>
<comment type="pathway">
    <text evidence="1">Carbohydrate biosynthesis; gluconeogenesis.</text>
</comment>
<comment type="pathway">
    <text evidence="1">Carbohydrate degradation; glycolysis; D-glyceraldehyde 3-phosphate and glycerone phosphate from D-glucose: step 2/4.</text>
</comment>
<comment type="subcellular location">
    <subcellularLocation>
        <location evidence="1">Cytoplasm</location>
    </subcellularLocation>
</comment>
<comment type="similarity">
    <text evidence="1">Belongs to the GPI family.</text>
</comment>
<organism>
    <name type="scientific">Caulobacter sp. (strain K31)</name>
    <dbReference type="NCBI Taxonomy" id="366602"/>
    <lineage>
        <taxon>Bacteria</taxon>
        <taxon>Pseudomonadati</taxon>
        <taxon>Pseudomonadota</taxon>
        <taxon>Alphaproteobacteria</taxon>
        <taxon>Caulobacterales</taxon>
        <taxon>Caulobacteraceae</taxon>
        <taxon>Caulobacter</taxon>
    </lineage>
</organism>
<dbReference type="EC" id="5.3.1.9" evidence="1"/>
<dbReference type="EMBL" id="CP000927">
    <property type="protein sequence ID" value="ABZ73808.1"/>
    <property type="molecule type" value="Genomic_DNA"/>
</dbReference>
<dbReference type="SMR" id="B0T2Y6"/>
<dbReference type="STRING" id="366602.Caul_4688"/>
<dbReference type="KEGG" id="cak:Caul_4688"/>
<dbReference type="eggNOG" id="COG0166">
    <property type="taxonomic scope" value="Bacteria"/>
</dbReference>
<dbReference type="HOGENOM" id="CLU_017947_3_1_5"/>
<dbReference type="OrthoDB" id="140919at2"/>
<dbReference type="UniPathway" id="UPA00109">
    <property type="reaction ID" value="UER00181"/>
</dbReference>
<dbReference type="UniPathway" id="UPA00138"/>
<dbReference type="GO" id="GO:0005829">
    <property type="term" value="C:cytosol"/>
    <property type="evidence" value="ECO:0007669"/>
    <property type="project" value="TreeGrafter"/>
</dbReference>
<dbReference type="GO" id="GO:0097367">
    <property type="term" value="F:carbohydrate derivative binding"/>
    <property type="evidence" value="ECO:0007669"/>
    <property type="project" value="InterPro"/>
</dbReference>
<dbReference type="GO" id="GO:0004347">
    <property type="term" value="F:glucose-6-phosphate isomerase activity"/>
    <property type="evidence" value="ECO:0007669"/>
    <property type="project" value="UniProtKB-UniRule"/>
</dbReference>
<dbReference type="GO" id="GO:0048029">
    <property type="term" value="F:monosaccharide binding"/>
    <property type="evidence" value="ECO:0007669"/>
    <property type="project" value="TreeGrafter"/>
</dbReference>
<dbReference type="GO" id="GO:0006094">
    <property type="term" value="P:gluconeogenesis"/>
    <property type="evidence" value="ECO:0007669"/>
    <property type="project" value="UniProtKB-UniRule"/>
</dbReference>
<dbReference type="GO" id="GO:0051156">
    <property type="term" value="P:glucose 6-phosphate metabolic process"/>
    <property type="evidence" value="ECO:0007669"/>
    <property type="project" value="TreeGrafter"/>
</dbReference>
<dbReference type="GO" id="GO:0006096">
    <property type="term" value="P:glycolytic process"/>
    <property type="evidence" value="ECO:0007669"/>
    <property type="project" value="UniProtKB-UniRule"/>
</dbReference>
<dbReference type="CDD" id="cd05015">
    <property type="entry name" value="SIS_PGI_1"/>
    <property type="match status" value="1"/>
</dbReference>
<dbReference type="CDD" id="cd05016">
    <property type="entry name" value="SIS_PGI_2"/>
    <property type="match status" value="1"/>
</dbReference>
<dbReference type="Gene3D" id="1.10.1390.10">
    <property type="match status" value="1"/>
</dbReference>
<dbReference type="Gene3D" id="3.40.50.10490">
    <property type="entry name" value="Glucose-6-phosphate isomerase like protein, domain 1"/>
    <property type="match status" value="2"/>
</dbReference>
<dbReference type="HAMAP" id="MF_00473">
    <property type="entry name" value="G6P_isomerase"/>
    <property type="match status" value="1"/>
</dbReference>
<dbReference type="InterPro" id="IPR001672">
    <property type="entry name" value="G6P_Isomerase"/>
</dbReference>
<dbReference type="InterPro" id="IPR023096">
    <property type="entry name" value="G6P_Isomerase_C"/>
</dbReference>
<dbReference type="InterPro" id="IPR018189">
    <property type="entry name" value="Phosphoglucose_isomerase_CS"/>
</dbReference>
<dbReference type="InterPro" id="IPR046348">
    <property type="entry name" value="SIS_dom_sf"/>
</dbReference>
<dbReference type="InterPro" id="IPR035476">
    <property type="entry name" value="SIS_PGI_1"/>
</dbReference>
<dbReference type="InterPro" id="IPR035482">
    <property type="entry name" value="SIS_PGI_2"/>
</dbReference>
<dbReference type="NCBIfam" id="NF001211">
    <property type="entry name" value="PRK00179.1"/>
    <property type="match status" value="1"/>
</dbReference>
<dbReference type="PANTHER" id="PTHR11469">
    <property type="entry name" value="GLUCOSE-6-PHOSPHATE ISOMERASE"/>
    <property type="match status" value="1"/>
</dbReference>
<dbReference type="PANTHER" id="PTHR11469:SF1">
    <property type="entry name" value="GLUCOSE-6-PHOSPHATE ISOMERASE"/>
    <property type="match status" value="1"/>
</dbReference>
<dbReference type="Pfam" id="PF00342">
    <property type="entry name" value="PGI"/>
    <property type="match status" value="1"/>
</dbReference>
<dbReference type="PRINTS" id="PR00662">
    <property type="entry name" value="G6PISOMERASE"/>
</dbReference>
<dbReference type="SUPFAM" id="SSF53697">
    <property type="entry name" value="SIS domain"/>
    <property type="match status" value="1"/>
</dbReference>
<dbReference type="PROSITE" id="PS00765">
    <property type="entry name" value="P_GLUCOSE_ISOMERASE_1"/>
    <property type="match status" value="1"/>
</dbReference>
<dbReference type="PROSITE" id="PS00174">
    <property type="entry name" value="P_GLUCOSE_ISOMERASE_2"/>
    <property type="match status" value="1"/>
</dbReference>
<dbReference type="PROSITE" id="PS51463">
    <property type="entry name" value="P_GLUCOSE_ISOMERASE_3"/>
    <property type="match status" value="1"/>
</dbReference>
<proteinExistence type="inferred from homology"/>
<name>G6PI_CAUSK</name>
<accession>B0T2Y6</accession>
<evidence type="ECO:0000255" key="1">
    <source>
        <dbReference type="HAMAP-Rule" id="MF_00473"/>
    </source>
</evidence>